<evidence type="ECO:0000255" key="1"/>
<evidence type="ECO:0000256" key="2">
    <source>
        <dbReference type="SAM" id="MobiDB-lite"/>
    </source>
</evidence>
<evidence type="ECO:0000269" key="3">
    <source>
    </source>
</evidence>
<evidence type="ECO:0000303" key="4">
    <source>
    </source>
</evidence>
<evidence type="ECO:0000305" key="5"/>
<evidence type="ECO:0000305" key="6">
    <source>
    </source>
</evidence>
<evidence type="ECO:0000312" key="7">
    <source>
        <dbReference type="ZFIN" id="ZDB-GENE-091204-94"/>
    </source>
</evidence>
<comment type="function">
    <text evidence="3">Key maternal determinant of the dorsal organizer and body axis formation in vertebrates that acts by promoting stabilization of beta-catenin (ctnnb1) (PubMed:30467143). Localizes on the plasma membrane of the future dorsal blastomeres in early blastulas and binds to and promotes the tankyrase-mediated degradation of axin (axin1 and axin2) (PubMed:30467143). Axin degradation results in stabilization and nuclear translocation of beta-catenin (ctnnb1) for activating organizer-specific target gene expression (PubMed:30467143).</text>
</comment>
<comment type="subunit">
    <text evidence="3">Interacts with axin1; leading to promote the tankyrase-mediated degradation of axin (PubMed:30467143). Interacts with axin2; leading to promote the tankyrase-mediated degradation of axin (PubMed:30467143).</text>
</comment>
<comment type="subcellular location">
    <subcellularLocation>
        <location evidence="3">Cell membrane</location>
        <topology evidence="1">Single-pass membrane protein</topology>
    </subcellularLocation>
    <text evidence="3">Enriched on the plasma membrane of blastomeres only in a small region in which the dorsal organizer will form.</text>
</comment>
<comment type="developmental stage">
    <text evidence="3">Expressed maternally (PubMed:30467143). Transcripts are first distributed evenly in blastomeres (PubMed:30467143). During the early cleavage period, transcripts in the vegetal pole region are transported toward the animal pole from one side of the yolk (PubMed:30467143). Transcript levels decrease 2 hours post fertilization (PubMed:30467143). The protein is enriched in a small region of blastomeres, in which the dorsal organizer will form (at protein level) (PubMed:30467143).</text>
</comment>
<comment type="disruption phenotype">
    <text evidence="3">Maternal mutant embryos lack the body axis: embryos develop normally during cleavage and blastula stages but lack the embryonic shield at the shield stage (PubMed:30467143). The dorsal organizer is absent and embryos fail to form the head and other dorsoanterior tissues (PubMed:30467143).</text>
</comment>
<comment type="miscellaneous">
    <text evidence="3">Was named huluwa after the Chinese animation TV series huluwa, known as Calabash Brothers in western countries.</text>
</comment>
<comment type="similarity">
    <text evidence="5">Belongs to the huluwa family.</text>
</comment>
<accession>E9QDC5</accession>
<keyword id="KW-1003">Cell membrane</keyword>
<keyword id="KW-0217">Developmental protein</keyword>
<keyword id="KW-0472">Membrane</keyword>
<keyword id="KW-1185">Reference proteome</keyword>
<keyword id="KW-0812">Transmembrane</keyword>
<keyword id="KW-1133">Transmembrane helix</keyword>
<feature type="chain" id="PRO_0000446379" description="Protein huluwa">
    <location>
        <begin position="1"/>
        <end position="294"/>
    </location>
</feature>
<feature type="topological domain" description="Extracellular" evidence="6">
    <location>
        <begin position="1"/>
        <end position="23"/>
    </location>
</feature>
<feature type="transmembrane region" description="Helical" evidence="1">
    <location>
        <begin position="24"/>
        <end position="44"/>
    </location>
</feature>
<feature type="topological domain" description="Cytoplasmic" evidence="6">
    <location>
        <begin position="45"/>
        <end position="294"/>
    </location>
</feature>
<feature type="region of interest" description="Disordered" evidence="2">
    <location>
        <begin position="154"/>
        <end position="175"/>
    </location>
</feature>
<feature type="short sequence motif" description="VPPNSP motif" evidence="6">
    <location>
        <begin position="164"/>
        <end position="169"/>
    </location>
</feature>
<feature type="short sequence motif" description="SLRRSST motif" evidence="6">
    <location>
        <begin position="184"/>
        <end position="190"/>
    </location>
</feature>
<feature type="mutagenesis site" description="Loss of function." evidence="3">
    <location>
        <begin position="164"/>
        <end position="169"/>
    </location>
</feature>
<feature type="mutagenesis site" description="Loss of function." evidence="3">
    <location>
        <begin position="184"/>
        <end position="190"/>
    </location>
</feature>
<proteinExistence type="evidence at protein level"/>
<organism>
    <name type="scientific">Danio rerio</name>
    <name type="common">Zebrafish</name>
    <name type="synonym">Brachydanio rerio</name>
    <dbReference type="NCBI Taxonomy" id="7955"/>
    <lineage>
        <taxon>Eukaryota</taxon>
        <taxon>Metazoa</taxon>
        <taxon>Chordata</taxon>
        <taxon>Craniata</taxon>
        <taxon>Vertebrata</taxon>
        <taxon>Euteleostomi</taxon>
        <taxon>Actinopterygii</taxon>
        <taxon>Neopterygii</taxon>
        <taxon>Teleostei</taxon>
        <taxon>Ostariophysi</taxon>
        <taxon>Cypriniformes</taxon>
        <taxon>Danionidae</taxon>
        <taxon>Danioninae</taxon>
        <taxon>Danio</taxon>
    </lineage>
</organism>
<protein>
    <recommendedName>
        <fullName evidence="4">Protein huluwa</fullName>
    </recommendedName>
</protein>
<name>HWA_DANRE</name>
<gene>
    <name evidence="4" type="primary">hwa</name>
    <name evidence="7" type="ORF">si:dkey-121h17.7</name>
</gene>
<reference key="1">
    <citation type="journal article" date="2013" name="Nature">
        <title>The zebrafish reference genome sequence and its relationship to the human genome.</title>
        <authorList>
            <person name="Howe K."/>
            <person name="Clark M.D."/>
            <person name="Torroja C.F."/>
            <person name="Torrance J."/>
            <person name="Berthelot C."/>
            <person name="Muffato M."/>
            <person name="Collins J.E."/>
            <person name="Humphray S."/>
            <person name="McLaren K."/>
            <person name="Matthews L."/>
            <person name="McLaren S."/>
            <person name="Sealy I."/>
            <person name="Caccamo M."/>
            <person name="Churcher C."/>
            <person name="Scott C."/>
            <person name="Barrett J.C."/>
            <person name="Koch R."/>
            <person name="Rauch G.J."/>
            <person name="White S."/>
            <person name="Chow W."/>
            <person name="Kilian B."/>
            <person name="Quintais L.T."/>
            <person name="Guerra-Assuncao J.A."/>
            <person name="Zhou Y."/>
            <person name="Gu Y."/>
            <person name="Yen J."/>
            <person name="Vogel J.H."/>
            <person name="Eyre T."/>
            <person name="Redmond S."/>
            <person name="Banerjee R."/>
            <person name="Chi J."/>
            <person name="Fu B."/>
            <person name="Langley E."/>
            <person name="Maguire S.F."/>
            <person name="Laird G.K."/>
            <person name="Lloyd D."/>
            <person name="Kenyon E."/>
            <person name="Donaldson S."/>
            <person name="Sehra H."/>
            <person name="Almeida-King J."/>
            <person name="Loveland J."/>
            <person name="Trevanion S."/>
            <person name="Jones M."/>
            <person name="Quail M."/>
            <person name="Willey D."/>
            <person name="Hunt A."/>
            <person name="Burton J."/>
            <person name="Sims S."/>
            <person name="McLay K."/>
            <person name="Plumb B."/>
            <person name="Davis J."/>
            <person name="Clee C."/>
            <person name="Oliver K."/>
            <person name="Clark R."/>
            <person name="Riddle C."/>
            <person name="Elliot D."/>
            <person name="Threadgold G."/>
            <person name="Harden G."/>
            <person name="Ware D."/>
            <person name="Begum S."/>
            <person name="Mortimore B."/>
            <person name="Kerry G."/>
            <person name="Heath P."/>
            <person name="Phillimore B."/>
            <person name="Tracey A."/>
            <person name="Corby N."/>
            <person name="Dunn M."/>
            <person name="Johnson C."/>
            <person name="Wood J."/>
            <person name="Clark S."/>
            <person name="Pelan S."/>
            <person name="Griffiths G."/>
            <person name="Smith M."/>
            <person name="Glithero R."/>
            <person name="Howden P."/>
            <person name="Barker N."/>
            <person name="Lloyd C."/>
            <person name="Stevens C."/>
            <person name="Harley J."/>
            <person name="Holt K."/>
            <person name="Panagiotidis G."/>
            <person name="Lovell J."/>
            <person name="Beasley H."/>
            <person name="Henderson C."/>
            <person name="Gordon D."/>
            <person name="Auger K."/>
            <person name="Wright D."/>
            <person name="Collins J."/>
            <person name="Raisen C."/>
            <person name="Dyer L."/>
            <person name="Leung K."/>
            <person name="Robertson L."/>
            <person name="Ambridge K."/>
            <person name="Leongamornlert D."/>
            <person name="McGuire S."/>
            <person name="Gilderthorp R."/>
            <person name="Griffiths C."/>
            <person name="Manthravadi D."/>
            <person name="Nichol S."/>
            <person name="Barker G."/>
            <person name="Whitehead S."/>
            <person name="Kay M."/>
            <person name="Brown J."/>
            <person name="Murnane C."/>
            <person name="Gray E."/>
            <person name="Humphries M."/>
            <person name="Sycamore N."/>
            <person name="Barker D."/>
            <person name="Saunders D."/>
            <person name="Wallis J."/>
            <person name="Babbage A."/>
            <person name="Hammond S."/>
            <person name="Mashreghi-Mohammadi M."/>
            <person name="Barr L."/>
            <person name="Martin S."/>
            <person name="Wray P."/>
            <person name="Ellington A."/>
            <person name="Matthews N."/>
            <person name="Ellwood M."/>
            <person name="Woodmansey R."/>
            <person name="Clark G."/>
            <person name="Cooper J."/>
            <person name="Tromans A."/>
            <person name="Grafham D."/>
            <person name="Skuce C."/>
            <person name="Pandian R."/>
            <person name="Andrews R."/>
            <person name="Harrison E."/>
            <person name="Kimberley A."/>
            <person name="Garnett J."/>
            <person name="Fosker N."/>
            <person name="Hall R."/>
            <person name="Garner P."/>
            <person name="Kelly D."/>
            <person name="Bird C."/>
            <person name="Palmer S."/>
            <person name="Gehring I."/>
            <person name="Berger A."/>
            <person name="Dooley C.M."/>
            <person name="Ersan-Urun Z."/>
            <person name="Eser C."/>
            <person name="Geiger H."/>
            <person name="Geisler M."/>
            <person name="Karotki L."/>
            <person name="Kirn A."/>
            <person name="Konantz J."/>
            <person name="Konantz M."/>
            <person name="Oberlander M."/>
            <person name="Rudolph-Geiger S."/>
            <person name="Teucke M."/>
            <person name="Lanz C."/>
            <person name="Raddatz G."/>
            <person name="Osoegawa K."/>
            <person name="Zhu B."/>
            <person name="Rapp A."/>
            <person name="Widaa S."/>
            <person name="Langford C."/>
            <person name="Yang F."/>
            <person name="Schuster S.C."/>
            <person name="Carter N.P."/>
            <person name="Harrow J."/>
            <person name="Ning Z."/>
            <person name="Herrero J."/>
            <person name="Searle S.M."/>
            <person name="Enright A."/>
            <person name="Geisler R."/>
            <person name="Plasterk R.H."/>
            <person name="Lee C."/>
            <person name="Westerfield M."/>
            <person name="de Jong P.J."/>
            <person name="Zon L.I."/>
            <person name="Postlethwait J.H."/>
            <person name="Nusslein-Volhard C."/>
            <person name="Hubbard T.J."/>
            <person name="Roest Crollius H."/>
            <person name="Rogers J."/>
            <person name="Stemple D.L."/>
        </authorList>
    </citation>
    <scope>NUCLEOTIDE SEQUENCE [LARGE SCALE GENOMIC DNA]</scope>
    <source>
        <strain>Tuebingen</strain>
    </source>
</reference>
<reference key="2">
    <citation type="journal article" date="2018" name="Science">
        <title>Maternal Huluwa dictates the embryonic body axis through beta-catenin in vertebrates.</title>
        <authorList>
            <person name="Yan L."/>
            <person name="Chen J."/>
            <person name="Zhu X."/>
            <person name="Sun J."/>
            <person name="Wu X."/>
            <person name="Shen W."/>
            <person name="Zhang W."/>
            <person name="Tao Q."/>
            <person name="Meng A."/>
        </authorList>
    </citation>
    <scope>FUNCTION</scope>
    <scope>SUBCELLULAR LOCATION</scope>
    <scope>TOPOLOGY</scope>
    <scope>INTERACTION WITH AXIN1 AND AXIN2</scope>
    <scope>DEVELOPMENTAL STAGE</scope>
    <scope>DISRUPTION PHENOTYPE</scope>
    <scope>MUTAGENESIS OF 164-VAL--PRO-169 AND 184-SER--THR-190</scope>
</reference>
<sequence>MSQLGSAVPSSNLPEGLPVSSLALLILVLIPCVLLLLLLNCLFVGYKLFRMTRRKRDRYGSEMSLMHSSYSTRQRITRFSDEPPVAPNRKTNYVSVSEPMLAPPITSSLTSSAERRATGQRAMFLRPDGATYAGSESLRVPHWRTSAPVLVQSSDSDMERVNTVPPNSPVLRVTPNGFSVPMTSLRRSSTMELESTSLDKIHVECESASIIPQENSCYVVSSSSSARGSGLDSDFGASAGVSLRILSMDSDGFPGSAWASALEWDYYDPSYVTQNHVPKHRPQAPPITTKQYWV</sequence>
<dbReference type="EMBL" id="CR382296">
    <property type="status" value="NOT_ANNOTATED_CDS"/>
    <property type="molecule type" value="Genomic_DNA"/>
</dbReference>
<dbReference type="RefSeq" id="NP_001410705.1">
    <property type="nucleotide sequence ID" value="NM_001423776.1"/>
</dbReference>
<dbReference type="RefSeq" id="XP_703380.2">
    <property type="nucleotide sequence ID" value="XM_698288.7"/>
</dbReference>
<dbReference type="SMR" id="E9QDC5"/>
<dbReference type="FunCoup" id="E9QDC5">
    <property type="interactions" value="63"/>
</dbReference>
<dbReference type="IntAct" id="E9QDC5">
    <property type="interactions" value="3"/>
</dbReference>
<dbReference type="STRING" id="7955.ENSDARP00000123053"/>
<dbReference type="PaxDb" id="7955-ENSDARP00000123053"/>
<dbReference type="Ensembl" id="ENSDART00000139288">
    <property type="protein sequence ID" value="ENSDARP00000123053"/>
    <property type="gene ID" value="ENSDARG00000094542"/>
</dbReference>
<dbReference type="GeneID" id="555985"/>
<dbReference type="AGR" id="ZFIN:ZDB-GENE-091204-94"/>
<dbReference type="ZFIN" id="ZDB-GENE-091204-94">
    <property type="gene designation" value="hwa"/>
</dbReference>
<dbReference type="eggNOG" id="ENOG502RZ6F">
    <property type="taxonomic scope" value="Eukaryota"/>
</dbReference>
<dbReference type="HOGENOM" id="CLU_946497_0_0_1"/>
<dbReference type="InParanoid" id="E9QDC5"/>
<dbReference type="OMA" id="NVPKHKH"/>
<dbReference type="OrthoDB" id="10031583at2759"/>
<dbReference type="PRO" id="PR:E9QDC5"/>
<dbReference type="Proteomes" id="UP000000437">
    <property type="component" value="Chromosome 21"/>
</dbReference>
<dbReference type="Bgee" id="ENSDARG00000094542">
    <property type="expression patterns" value="Expressed in ovary and 17 other cell types or tissues"/>
</dbReference>
<dbReference type="GO" id="GO:0005886">
    <property type="term" value="C:plasma membrane"/>
    <property type="evidence" value="ECO:0000314"/>
    <property type="project" value="ZFIN"/>
</dbReference>
<dbReference type="GO" id="GO:0009953">
    <property type="term" value="P:dorsal/ventral pattern formation"/>
    <property type="evidence" value="ECO:0000314"/>
    <property type="project" value="UniProtKB"/>
</dbReference>
<dbReference type="GO" id="GO:0000578">
    <property type="term" value="P:embryonic axis specification"/>
    <property type="evidence" value="ECO:0000314"/>
    <property type="project" value="UniProtKB"/>
</dbReference>
<dbReference type="GO" id="GO:0090263">
    <property type="term" value="P:positive regulation of canonical Wnt signaling pathway"/>
    <property type="evidence" value="ECO:0000314"/>
    <property type="project" value="UniProtKB"/>
</dbReference>
<dbReference type="GO" id="GO:0060828">
    <property type="term" value="P:regulation of canonical Wnt signaling pathway"/>
    <property type="evidence" value="ECO:0000315"/>
    <property type="project" value="ZFIN"/>
</dbReference>